<keyword id="KW-0227">DNA damage</keyword>
<keyword id="KW-0233">DNA recombination</keyword>
<keyword id="KW-0234">DNA repair</keyword>
<accession>B7N6F3</accession>
<proteinExistence type="inferred from homology"/>
<feature type="chain" id="PRO_1000118719" description="DNA repair protein RecO">
    <location>
        <begin position="1"/>
        <end position="242"/>
    </location>
</feature>
<sequence>MEGWQRAFVLHSRPWSETSLMLDVFTEESGRVRLVAKGARSKRSTLKGALQPFTPLLLRFGGRGEVKTLRSAEAVSLALPLSGITLYSGLYINELLSRVLEYETRFSELFFDYLHCIQSLAGATGTPEPALRRFELALLGHLGYGVNFTHCAGSGEPVDDTMTYRYREEKGFIASVVIDNKTFTGRQLKALNAREFPDADTLRAAKRFTRMALKPYLGGKPLKSRELFRQFMPKRTVKTHYE</sequence>
<dbReference type="EMBL" id="CU928163">
    <property type="protein sequence ID" value="CAR14062.1"/>
    <property type="molecule type" value="Genomic_DNA"/>
</dbReference>
<dbReference type="RefSeq" id="WP_000399393.1">
    <property type="nucleotide sequence ID" value="NC_011751.1"/>
</dbReference>
<dbReference type="RefSeq" id="YP_002413588.1">
    <property type="nucleotide sequence ID" value="NC_011751.1"/>
</dbReference>
<dbReference type="SMR" id="B7N6F3"/>
<dbReference type="STRING" id="585056.ECUMN_2886"/>
<dbReference type="GeneID" id="93774526"/>
<dbReference type="KEGG" id="eum:ECUMN_2886"/>
<dbReference type="PATRIC" id="fig|585056.7.peg.3072"/>
<dbReference type="HOGENOM" id="CLU_066645_1_0_6"/>
<dbReference type="Proteomes" id="UP000007097">
    <property type="component" value="Chromosome"/>
</dbReference>
<dbReference type="GO" id="GO:0043590">
    <property type="term" value="C:bacterial nucleoid"/>
    <property type="evidence" value="ECO:0007669"/>
    <property type="project" value="TreeGrafter"/>
</dbReference>
<dbReference type="GO" id="GO:0006310">
    <property type="term" value="P:DNA recombination"/>
    <property type="evidence" value="ECO:0007669"/>
    <property type="project" value="UniProtKB-UniRule"/>
</dbReference>
<dbReference type="GO" id="GO:0006302">
    <property type="term" value="P:double-strand break repair"/>
    <property type="evidence" value="ECO:0007669"/>
    <property type="project" value="TreeGrafter"/>
</dbReference>
<dbReference type="FunFam" id="1.20.1440.120:FF:000001">
    <property type="entry name" value="DNA repair protein RecO"/>
    <property type="match status" value="1"/>
</dbReference>
<dbReference type="FunFam" id="2.40.50.140:FF:000074">
    <property type="entry name" value="DNA repair protein RecO"/>
    <property type="match status" value="1"/>
</dbReference>
<dbReference type="Gene3D" id="2.40.50.140">
    <property type="entry name" value="Nucleic acid-binding proteins"/>
    <property type="match status" value="1"/>
</dbReference>
<dbReference type="Gene3D" id="1.20.1440.120">
    <property type="entry name" value="Recombination protein O, C-terminal domain"/>
    <property type="match status" value="1"/>
</dbReference>
<dbReference type="HAMAP" id="MF_00201">
    <property type="entry name" value="RecO"/>
    <property type="match status" value="1"/>
</dbReference>
<dbReference type="InterPro" id="IPR037278">
    <property type="entry name" value="ARFGAP/RecO"/>
</dbReference>
<dbReference type="InterPro" id="IPR022572">
    <property type="entry name" value="DNA_rep/recomb_RecO_N"/>
</dbReference>
<dbReference type="InterPro" id="IPR012340">
    <property type="entry name" value="NA-bd_OB-fold"/>
</dbReference>
<dbReference type="InterPro" id="IPR003717">
    <property type="entry name" value="RecO"/>
</dbReference>
<dbReference type="InterPro" id="IPR042242">
    <property type="entry name" value="RecO_C"/>
</dbReference>
<dbReference type="NCBIfam" id="TIGR00613">
    <property type="entry name" value="reco"/>
    <property type="match status" value="1"/>
</dbReference>
<dbReference type="PANTHER" id="PTHR33991">
    <property type="entry name" value="DNA REPAIR PROTEIN RECO"/>
    <property type="match status" value="1"/>
</dbReference>
<dbReference type="PANTHER" id="PTHR33991:SF1">
    <property type="entry name" value="DNA REPAIR PROTEIN RECO"/>
    <property type="match status" value="1"/>
</dbReference>
<dbReference type="Pfam" id="PF02565">
    <property type="entry name" value="RecO_C"/>
    <property type="match status" value="1"/>
</dbReference>
<dbReference type="Pfam" id="PF11967">
    <property type="entry name" value="RecO_N"/>
    <property type="match status" value="1"/>
</dbReference>
<dbReference type="SUPFAM" id="SSF57863">
    <property type="entry name" value="ArfGap/RecO-like zinc finger"/>
    <property type="match status" value="1"/>
</dbReference>
<dbReference type="SUPFAM" id="SSF50249">
    <property type="entry name" value="Nucleic acid-binding proteins"/>
    <property type="match status" value="1"/>
</dbReference>
<gene>
    <name evidence="1" type="primary">recO</name>
    <name type="ordered locus">ECUMN_2886</name>
</gene>
<protein>
    <recommendedName>
        <fullName evidence="1">DNA repair protein RecO</fullName>
    </recommendedName>
    <alternativeName>
        <fullName evidence="1">Recombination protein O</fullName>
    </alternativeName>
</protein>
<name>RECO_ECOLU</name>
<reference key="1">
    <citation type="journal article" date="2009" name="PLoS Genet.">
        <title>Organised genome dynamics in the Escherichia coli species results in highly diverse adaptive paths.</title>
        <authorList>
            <person name="Touchon M."/>
            <person name="Hoede C."/>
            <person name="Tenaillon O."/>
            <person name="Barbe V."/>
            <person name="Baeriswyl S."/>
            <person name="Bidet P."/>
            <person name="Bingen E."/>
            <person name="Bonacorsi S."/>
            <person name="Bouchier C."/>
            <person name="Bouvet O."/>
            <person name="Calteau A."/>
            <person name="Chiapello H."/>
            <person name="Clermont O."/>
            <person name="Cruveiller S."/>
            <person name="Danchin A."/>
            <person name="Diard M."/>
            <person name="Dossat C."/>
            <person name="Karoui M.E."/>
            <person name="Frapy E."/>
            <person name="Garry L."/>
            <person name="Ghigo J.M."/>
            <person name="Gilles A.M."/>
            <person name="Johnson J."/>
            <person name="Le Bouguenec C."/>
            <person name="Lescat M."/>
            <person name="Mangenot S."/>
            <person name="Martinez-Jehanne V."/>
            <person name="Matic I."/>
            <person name="Nassif X."/>
            <person name="Oztas S."/>
            <person name="Petit M.A."/>
            <person name="Pichon C."/>
            <person name="Rouy Z."/>
            <person name="Ruf C.S."/>
            <person name="Schneider D."/>
            <person name="Tourret J."/>
            <person name="Vacherie B."/>
            <person name="Vallenet D."/>
            <person name="Medigue C."/>
            <person name="Rocha E.P.C."/>
            <person name="Denamur E."/>
        </authorList>
    </citation>
    <scope>NUCLEOTIDE SEQUENCE [LARGE SCALE GENOMIC DNA]</scope>
    <source>
        <strain>UMN026 / ExPEC</strain>
    </source>
</reference>
<comment type="function">
    <text evidence="1">Involved in DNA repair and RecF pathway recombination.</text>
</comment>
<comment type="subunit">
    <text evidence="1">Monomer.</text>
</comment>
<comment type="similarity">
    <text evidence="1">Belongs to the RecO family.</text>
</comment>
<organism>
    <name type="scientific">Escherichia coli O17:K52:H18 (strain UMN026 / ExPEC)</name>
    <dbReference type="NCBI Taxonomy" id="585056"/>
    <lineage>
        <taxon>Bacteria</taxon>
        <taxon>Pseudomonadati</taxon>
        <taxon>Pseudomonadota</taxon>
        <taxon>Gammaproteobacteria</taxon>
        <taxon>Enterobacterales</taxon>
        <taxon>Enterobacteriaceae</taxon>
        <taxon>Escherichia</taxon>
    </lineage>
</organism>
<evidence type="ECO:0000255" key="1">
    <source>
        <dbReference type="HAMAP-Rule" id="MF_00201"/>
    </source>
</evidence>